<evidence type="ECO:0000255" key="1">
    <source>
        <dbReference type="HAMAP-Rule" id="MF_01157"/>
    </source>
</evidence>
<name>DIAA_SALA4</name>
<organism>
    <name type="scientific">Salmonella agona (strain SL483)</name>
    <dbReference type="NCBI Taxonomy" id="454166"/>
    <lineage>
        <taxon>Bacteria</taxon>
        <taxon>Pseudomonadati</taxon>
        <taxon>Pseudomonadota</taxon>
        <taxon>Gammaproteobacteria</taxon>
        <taxon>Enterobacterales</taxon>
        <taxon>Enterobacteriaceae</taxon>
        <taxon>Salmonella</taxon>
    </lineage>
</organism>
<sequence length="196" mass="21109">MLERIKVCFTESIQTQIAAAEALPDAISRAAMTLVHSLLNGNKILCCGNGTSAANAQHFAASMINRFETERPSLPAIALNTDNVVLTAIANDRLHDEVYAKQVRALGHAGDVLLAISTRGNSRDIVKAVEAAVTRDMTIVALTGYDGGELAGLLGPQDVEIRIPSHHSARIQEMHMLTVNCLCDLIDNTLFPHQDD</sequence>
<feature type="chain" id="PRO_1000137795" description="DnaA initiator-associating protein DiaA">
    <location>
        <begin position="1"/>
        <end position="196"/>
    </location>
</feature>
<feature type="domain" description="SIS" evidence="1">
    <location>
        <begin position="34"/>
        <end position="196"/>
    </location>
</feature>
<comment type="function">
    <text evidence="1">Required for the timely initiation of chromosomal replication via direct interactions with the DnaA initiator protein.</text>
</comment>
<comment type="subunit">
    <text evidence="1">Homotetramer; dimer of dimers.</text>
</comment>
<comment type="similarity">
    <text evidence="1">Belongs to the SIS family. DiaA subfamily.</text>
</comment>
<accession>B5F6R9</accession>
<gene>
    <name evidence="1" type="primary">diaA</name>
    <name type="ordered locus">SeAg_B3453</name>
</gene>
<dbReference type="EMBL" id="CP001138">
    <property type="protein sequence ID" value="ACH50448.1"/>
    <property type="molecule type" value="Genomic_DNA"/>
</dbReference>
<dbReference type="RefSeq" id="WP_000893481.1">
    <property type="nucleotide sequence ID" value="NC_011149.1"/>
</dbReference>
<dbReference type="SMR" id="B5F6R9"/>
<dbReference type="GeneID" id="66757607"/>
<dbReference type="KEGG" id="sea:SeAg_B3453"/>
<dbReference type="HOGENOM" id="CLU_080999_3_1_6"/>
<dbReference type="Proteomes" id="UP000008819">
    <property type="component" value="Chromosome"/>
</dbReference>
<dbReference type="GO" id="GO:0097367">
    <property type="term" value="F:carbohydrate derivative binding"/>
    <property type="evidence" value="ECO:0007669"/>
    <property type="project" value="InterPro"/>
</dbReference>
<dbReference type="GO" id="GO:1901135">
    <property type="term" value="P:carbohydrate derivative metabolic process"/>
    <property type="evidence" value="ECO:0007669"/>
    <property type="project" value="InterPro"/>
</dbReference>
<dbReference type="GO" id="GO:0006260">
    <property type="term" value="P:DNA replication"/>
    <property type="evidence" value="ECO:0007669"/>
    <property type="project" value="UniProtKB-UniRule"/>
</dbReference>
<dbReference type="CDD" id="cd05006">
    <property type="entry name" value="SIS_GmhA"/>
    <property type="match status" value="1"/>
</dbReference>
<dbReference type="FunFam" id="3.40.50.10490:FF:000006">
    <property type="entry name" value="DnaA initiator-associating protein DiaA"/>
    <property type="match status" value="1"/>
</dbReference>
<dbReference type="Gene3D" id="3.40.50.10490">
    <property type="entry name" value="Glucose-6-phosphate isomerase like protein, domain 1"/>
    <property type="match status" value="1"/>
</dbReference>
<dbReference type="HAMAP" id="MF_01157">
    <property type="entry name" value="SIS_DiaA"/>
    <property type="match status" value="1"/>
</dbReference>
<dbReference type="InterPro" id="IPR023070">
    <property type="entry name" value="DiaA"/>
</dbReference>
<dbReference type="InterPro" id="IPR035461">
    <property type="entry name" value="GmhA/DiaA"/>
</dbReference>
<dbReference type="InterPro" id="IPR001347">
    <property type="entry name" value="SIS_dom"/>
</dbReference>
<dbReference type="InterPro" id="IPR046348">
    <property type="entry name" value="SIS_dom_sf"/>
</dbReference>
<dbReference type="InterPro" id="IPR050099">
    <property type="entry name" value="SIS_GmhA/DiaA_subfam"/>
</dbReference>
<dbReference type="NCBIfam" id="NF008138">
    <property type="entry name" value="PRK10886.1"/>
    <property type="match status" value="1"/>
</dbReference>
<dbReference type="PANTHER" id="PTHR30390:SF6">
    <property type="entry name" value="DNAA INITIATOR-ASSOCIATING PROTEIN DIAA"/>
    <property type="match status" value="1"/>
</dbReference>
<dbReference type="PANTHER" id="PTHR30390">
    <property type="entry name" value="SEDOHEPTULOSE 7-PHOSPHATE ISOMERASE / DNAA INITIATOR-ASSOCIATING FACTOR FOR REPLICATION INITIATION"/>
    <property type="match status" value="1"/>
</dbReference>
<dbReference type="Pfam" id="PF13580">
    <property type="entry name" value="SIS_2"/>
    <property type="match status" value="1"/>
</dbReference>
<dbReference type="SUPFAM" id="SSF53697">
    <property type="entry name" value="SIS domain"/>
    <property type="match status" value="1"/>
</dbReference>
<dbReference type="PROSITE" id="PS51464">
    <property type="entry name" value="SIS"/>
    <property type="match status" value="1"/>
</dbReference>
<proteinExistence type="inferred from homology"/>
<reference key="1">
    <citation type="journal article" date="2011" name="J. Bacteriol.">
        <title>Comparative genomics of 28 Salmonella enterica isolates: evidence for CRISPR-mediated adaptive sublineage evolution.</title>
        <authorList>
            <person name="Fricke W.F."/>
            <person name="Mammel M.K."/>
            <person name="McDermott P.F."/>
            <person name="Tartera C."/>
            <person name="White D.G."/>
            <person name="Leclerc J.E."/>
            <person name="Ravel J."/>
            <person name="Cebula T.A."/>
        </authorList>
    </citation>
    <scope>NUCLEOTIDE SEQUENCE [LARGE SCALE GENOMIC DNA]</scope>
    <source>
        <strain>SL483</strain>
    </source>
</reference>
<keyword id="KW-0235">DNA replication</keyword>
<protein>
    <recommendedName>
        <fullName evidence="1">DnaA initiator-associating protein DiaA</fullName>
    </recommendedName>
</protein>